<organism>
    <name type="scientific">Limosilactobacillus reuteri subsp. reuteri (strain JCM 1112)</name>
    <name type="common">Lactobacillus reuteri</name>
    <dbReference type="NCBI Taxonomy" id="557433"/>
    <lineage>
        <taxon>Bacteria</taxon>
        <taxon>Bacillati</taxon>
        <taxon>Bacillota</taxon>
        <taxon>Bacilli</taxon>
        <taxon>Lactobacillales</taxon>
        <taxon>Lactobacillaceae</taxon>
        <taxon>Limosilactobacillus</taxon>
    </lineage>
</organism>
<accession>B2GA02</accession>
<feature type="chain" id="PRO_1000128209" description="Asparagine--tRNA ligase">
    <location>
        <begin position="1"/>
        <end position="432"/>
    </location>
</feature>
<comment type="catalytic activity">
    <reaction evidence="1">
        <text>tRNA(Asn) + L-asparagine + ATP = L-asparaginyl-tRNA(Asn) + AMP + diphosphate + H(+)</text>
        <dbReference type="Rhea" id="RHEA:11180"/>
        <dbReference type="Rhea" id="RHEA-COMP:9659"/>
        <dbReference type="Rhea" id="RHEA-COMP:9674"/>
        <dbReference type="ChEBI" id="CHEBI:15378"/>
        <dbReference type="ChEBI" id="CHEBI:30616"/>
        <dbReference type="ChEBI" id="CHEBI:33019"/>
        <dbReference type="ChEBI" id="CHEBI:58048"/>
        <dbReference type="ChEBI" id="CHEBI:78442"/>
        <dbReference type="ChEBI" id="CHEBI:78515"/>
        <dbReference type="ChEBI" id="CHEBI:456215"/>
        <dbReference type="EC" id="6.1.1.22"/>
    </reaction>
</comment>
<comment type="subunit">
    <text evidence="1">Homodimer.</text>
</comment>
<comment type="subcellular location">
    <subcellularLocation>
        <location evidence="1">Cytoplasm</location>
    </subcellularLocation>
</comment>
<comment type="similarity">
    <text evidence="1">Belongs to the class-II aminoacyl-tRNA synthetase family.</text>
</comment>
<gene>
    <name evidence="1" type="primary">asnS</name>
    <name type="ordered locus">LAR_1768</name>
</gene>
<name>SYN_LIMRJ</name>
<dbReference type="EC" id="6.1.1.22" evidence="1"/>
<dbReference type="EMBL" id="AP007281">
    <property type="protein sequence ID" value="BAG26284.1"/>
    <property type="molecule type" value="Genomic_DNA"/>
</dbReference>
<dbReference type="RefSeq" id="WP_011953603.1">
    <property type="nucleotide sequence ID" value="NC_010609.1"/>
</dbReference>
<dbReference type="SMR" id="B2GA02"/>
<dbReference type="KEGG" id="lrf:LAR_1768"/>
<dbReference type="HOGENOM" id="CLU_004553_2_0_9"/>
<dbReference type="GO" id="GO:0005737">
    <property type="term" value="C:cytoplasm"/>
    <property type="evidence" value="ECO:0007669"/>
    <property type="project" value="UniProtKB-SubCell"/>
</dbReference>
<dbReference type="GO" id="GO:0004816">
    <property type="term" value="F:asparagine-tRNA ligase activity"/>
    <property type="evidence" value="ECO:0007669"/>
    <property type="project" value="UniProtKB-UniRule"/>
</dbReference>
<dbReference type="GO" id="GO:0005524">
    <property type="term" value="F:ATP binding"/>
    <property type="evidence" value="ECO:0007669"/>
    <property type="project" value="UniProtKB-UniRule"/>
</dbReference>
<dbReference type="GO" id="GO:0140096">
    <property type="term" value="F:catalytic activity, acting on a protein"/>
    <property type="evidence" value="ECO:0007669"/>
    <property type="project" value="UniProtKB-ARBA"/>
</dbReference>
<dbReference type="GO" id="GO:0003676">
    <property type="term" value="F:nucleic acid binding"/>
    <property type="evidence" value="ECO:0007669"/>
    <property type="project" value="InterPro"/>
</dbReference>
<dbReference type="GO" id="GO:0016740">
    <property type="term" value="F:transferase activity"/>
    <property type="evidence" value="ECO:0007669"/>
    <property type="project" value="UniProtKB-ARBA"/>
</dbReference>
<dbReference type="GO" id="GO:0006421">
    <property type="term" value="P:asparaginyl-tRNA aminoacylation"/>
    <property type="evidence" value="ECO:0007669"/>
    <property type="project" value="UniProtKB-UniRule"/>
</dbReference>
<dbReference type="CDD" id="cd04323">
    <property type="entry name" value="AsnRS_cyto_like_N"/>
    <property type="match status" value="1"/>
</dbReference>
<dbReference type="CDD" id="cd00776">
    <property type="entry name" value="AsxRS_core"/>
    <property type="match status" value="1"/>
</dbReference>
<dbReference type="Gene3D" id="3.30.930.10">
    <property type="entry name" value="Bira Bifunctional Protein, Domain 2"/>
    <property type="match status" value="1"/>
</dbReference>
<dbReference type="Gene3D" id="2.40.50.140">
    <property type="entry name" value="Nucleic acid-binding proteins"/>
    <property type="match status" value="1"/>
</dbReference>
<dbReference type="HAMAP" id="MF_00534">
    <property type="entry name" value="Asn_tRNA_synth"/>
    <property type="match status" value="1"/>
</dbReference>
<dbReference type="InterPro" id="IPR004364">
    <property type="entry name" value="Aa-tRNA-synt_II"/>
</dbReference>
<dbReference type="InterPro" id="IPR006195">
    <property type="entry name" value="aa-tRNA-synth_II"/>
</dbReference>
<dbReference type="InterPro" id="IPR045864">
    <property type="entry name" value="aa-tRNA-synth_II/BPL/LPL"/>
</dbReference>
<dbReference type="InterPro" id="IPR004522">
    <property type="entry name" value="Asn-tRNA-ligase"/>
</dbReference>
<dbReference type="InterPro" id="IPR002312">
    <property type="entry name" value="Asp/Asn-tRNA-synth_IIb"/>
</dbReference>
<dbReference type="InterPro" id="IPR012340">
    <property type="entry name" value="NA-bd_OB-fold"/>
</dbReference>
<dbReference type="InterPro" id="IPR004365">
    <property type="entry name" value="NA-bd_OB_tRNA"/>
</dbReference>
<dbReference type="NCBIfam" id="TIGR00457">
    <property type="entry name" value="asnS"/>
    <property type="match status" value="1"/>
</dbReference>
<dbReference type="NCBIfam" id="NF003037">
    <property type="entry name" value="PRK03932.1"/>
    <property type="match status" value="1"/>
</dbReference>
<dbReference type="Pfam" id="PF00152">
    <property type="entry name" value="tRNA-synt_2"/>
    <property type="match status" value="1"/>
</dbReference>
<dbReference type="Pfam" id="PF01336">
    <property type="entry name" value="tRNA_anti-codon"/>
    <property type="match status" value="1"/>
</dbReference>
<dbReference type="PRINTS" id="PR01042">
    <property type="entry name" value="TRNASYNTHASP"/>
</dbReference>
<dbReference type="SUPFAM" id="SSF55681">
    <property type="entry name" value="Class II aaRS and biotin synthetases"/>
    <property type="match status" value="1"/>
</dbReference>
<dbReference type="SUPFAM" id="SSF50249">
    <property type="entry name" value="Nucleic acid-binding proteins"/>
    <property type="match status" value="1"/>
</dbReference>
<dbReference type="PROSITE" id="PS50862">
    <property type="entry name" value="AA_TRNA_LIGASE_II"/>
    <property type="match status" value="1"/>
</dbReference>
<sequence>METITISEVPKHVGETVKIGVWLTDKRSSGKIAFLQLRDGTGFFQGIIRKNDVSEEKFDSAKHDLHQETSFWVTGEIAEDKRSKFGYEIHIKDFDIVGESEDYPIGNKEHGIDFLLDNRHLWLRSRKPWALMRIRSRVKLATMEFFEKHGFTQFDAPELTGSAPEGTTELFETDYFDRSAFLSQSGQLYAEAGAMALGRVYTMGPTFRAEKSKTRRHLMEFWMIEPEMAWMHQDESLKIQEQYIAYLVQDLIDHCARELEMVGRSVESLKPFTELPYPRITYKEAIEILQKGGFDVEYGADFGSPEETYLADQFQKPVFILNYPKEIKAFYMPEDPEDSRQVICADLLAPEGYGEIIGGSERSYDYEYITNKLEENGLSKEDYGWYDDLRKYGSIPHSGFGMGLERFLAWITLQDHIRETIPFPRMLNRLNP</sequence>
<protein>
    <recommendedName>
        <fullName evidence="1">Asparagine--tRNA ligase</fullName>
        <ecNumber evidence="1">6.1.1.22</ecNumber>
    </recommendedName>
    <alternativeName>
        <fullName evidence="1">Asparaginyl-tRNA synthetase</fullName>
        <shortName evidence="1">AsnRS</shortName>
    </alternativeName>
</protein>
<keyword id="KW-0030">Aminoacyl-tRNA synthetase</keyword>
<keyword id="KW-0067">ATP-binding</keyword>
<keyword id="KW-0963">Cytoplasm</keyword>
<keyword id="KW-0436">Ligase</keyword>
<keyword id="KW-0547">Nucleotide-binding</keyword>
<keyword id="KW-0648">Protein biosynthesis</keyword>
<proteinExistence type="inferred from homology"/>
<evidence type="ECO:0000255" key="1">
    <source>
        <dbReference type="HAMAP-Rule" id="MF_00534"/>
    </source>
</evidence>
<reference key="1">
    <citation type="journal article" date="2008" name="DNA Res.">
        <title>Comparative genome analysis of Lactobacillus reuteri and Lactobacillus fermentum reveal a genomic island for reuterin and cobalamin production.</title>
        <authorList>
            <person name="Morita H."/>
            <person name="Toh H."/>
            <person name="Fukuda S."/>
            <person name="Horikawa H."/>
            <person name="Oshima K."/>
            <person name="Suzuki T."/>
            <person name="Murakami M."/>
            <person name="Hisamatsu S."/>
            <person name="Kato Y."/>
            <person name="Takizawa T."/>
            <person name="Fukuoka H."/>
            <person name="Yoshimura T."/>
            <person name="Itoh K."/>
            <person name="O'Sullivan D.J."/>
            <person name="McKay L.L."/>
            <person name="Ohno H."/>
            <person name="Kikuchi J."/>
            <person name="Masaoka T."/>
            <person name="Hattori M."/>
        </authorList>
    </citation>
    <scope>NUCLEOTIDE SEQUENCE [LARGE SCALE GENOMIC DNA]</scope>
    <source>
        <strain>JCM 1112</strain>
    </source>
</reference>